<reference key="1">
    <citation type="journal article" date="2001" name="Science">
        <title>Comparative genomics of Listeria species.</title>
        <authorList>
            <person name="Glaser P."/>
            <person name="Frangeul L."/>
            <person name="Buchrieser C."/>
            <person name="Rusniok C."/>
            <person name="Amend A."/>
            <person name="Baquero F."/>
            <person name="Berche P."/>
            <person name="Bloecker H."/>
            <person name="Brandt P."/>
            <person name="Chakraborty T."/>
            <person name="Charbit A."/>
            <person name="Chetouani F."/>
            <person name="Couve E."/>
            <person name="de Daruvar A."/>
            <person name="Dehoux P."/>
            <person name="Domann E."/>
            <person name="Dominguez-Bernal G."/>
            <person name="Duchaud E."/>
            <person name="Durant L."/>
            <person name="Dussurget O."/>
            <person name="Entian K.-D."/>
            <person name="Fsihi H."/>
            <person name="Garcia-del Portillo F."/>
            <person name="Garrido P."/>
            <person name="Gautier L."/>
            <person name="Goebel W."/>
            <person name="Gomez-Lopez N."/>
            <person name="Hain T."/>
            <person name="Hauf J."/>
            <person name="Jackson D."/>
            <person name="Jones L.-M."/>
            <person name="Kaerst U."/>
            <person name="Kreft J."/>
            <person name="Kuhn M."/>
            <person name="Kunst F."/>
            <person name="Kurapkat G."/>
            <person name="Madueno E."/>
            <person name="Maitournam A."/>
            <person name="Mata Vicente J."/>
            <person name="Ng E."/>
            <person name="Nedjari H."/>
            <person name="Nordsiek G."/>
            <person name="Novella S."/>
            <person name="de Pablos B."/>
            <person name="Perez-Diaz J.-C."/>
            <person name="Purcell R."/>
            <person name="Remmel B."/>
            <person name="Rose M."/>
            <person name="Schlueter T."/>
            <person name="Simoes N."/>
            <person name="Tierrez A."/>
            <person name="Vazquez-Boland J.-A."/>
            <person name="Voss H."/>
            <person name="Wehland J."/>
            <person name="Cossart P."/>
        </authorList>
    </citation>
    <scope>NUCLEOTIDE SEQUENCE [LARGE SCALE GENOMIC DNA]</scope>
    <source>
        <strain>ATCC BAA-679 / EGD-e</strain>
    </source>
</reference>
<organism>
    <name type="scientific">Listeria monocytogenes serovar 1/2a (strain ATCC BAA-679 / EGD-e)</name>
    <dbReference type="NCBI Taxonomy" id="169963"/>
    <lineage>
        <taxon>Bacteria</taxon>
        <taxon>Bacillati</taxon>
        <taxon>Bacillota</taxon>
        <taxon>Bacilli</taxon>
        <taxon>Bacillales</taxon>
        <taxon>Listeriaceae</taxon>
        <taxon>Listeria</taxon>
    </lineage>
</organism>
<protein>
    <recommendedName>
        <fullName evidence="1">Aspartate 1-decarboxylase</fullName>
        <ecNumber evidence="1">4.1.1.11</ecNumber>
    </recommendedName>
    <alternativeName>
        <fullName evidence="1">Aspartate alpha-decarboxylase</fullName>
    </alternativeName>
    <component>
        <recommendedName>
            <fullName evidence="1">Aspartate 1-decarboxylase beta chain</fullName>
        </recommendedName>
    </component>
    <component>
        <recommendedName>
            <fullName evidence="1">Aspartate 1-decarboxylase alpha chain</fullName>
        </recommendedName>
    </component>
</protein>
<keyword id="KW-0068">Autocatalytic cleavage</keyword>
<keyword id="KW-0963">Cytoplasm</keyword>
<keyword id="KW-0210">Decarboxylase</keyword>
<keyword id="KW-0456">Lyase</keyword>
<keyword id="KW-0566">Pantothenate biosynthesis</keyword>
<keyword id="KW-0670">Pyruvate</keyword>
<keyword id="KW-1185">Reference proteome</keyword>
<keyword id="KW-0704">Schiff base</keyword>
<keyword id="KW-0865">Zymogen</keyword>
<evidence type="ECO:0000255" key="1">
    <source>
        <dbReference type="HAMAP-Rule" id="MF_00446"/>
    </source>
</evidence>
<dbReference type="EC" id="4.1.1.11" evidence="1"/>
<dbReference type="EMBL" id="AL591981">
    <property type="protein sequence ID" value="CAC99978.1"/>
    <property type="molecule type" value="Genomic_DNA"/>
</dbReference>
<dbReference type="PIR" id="AD1312">
    <property type="entry name" value="AD1312"/>
</dbReference>
<dbReference type="RefSeq" id="NP_465424.1">
    <property type="nucleotide sequence ID" value="NC_003210.1"/>
</dbReference>
<dbReference type="RefSeq" id="WP_003723010.1">
    <property type="nucleotide sequence ID" value="NZ_CP149495.1"/>
</dbReference>
<dbReference type="SMR" id="Q8Y603"/>
<dbReference type="STRING" id="169963.gene:17594585"/>
<dbReference type="PaxDb" id="169963-lmo1900"/>
<dbReference type="EnsemblBacteria" id="CAC99978">
    <property type="protein sequence ID" value="CAC99978"/>
    <property type="gene ID" value="CAC99978"/>
</dbReference>
<dbReference type="GeneID" id="985787"/>
<dbReference type="KEGG" id="lmo:lmo1900"/>
<dbReference type="PATRIC" id="fig|169963.11.peg.1946"/>
<dbReference type="eggNOG" id="COG0853">
    <property type="taxonomic scope" value="Bacteria"/>
</dbReference>
<dbReference type="HOGENOM" id="CLU_115305_2_0_9"/>
<dbReference type="OrthoDB" id="9803983at2"/>
<dbReference type="PhylomeDB" id="Q8Y603"/>
<dbReference type="BioCyc" id="LMON169963:LMO1900-MONOMER"/>
<dbReference type="UniPathway" id="UPA00028">
    <property type="reaction ID" value="UER00002"/>
</dbReference>
<dbReference type="Proteomes" id="UP000000817">
    <property type="component" value="Chromosome"/>
</dbReference>
<dbReference type="GO" id="GO:0005829">
    <property type="term" value="C:cytosol"/>
    <property type="evidence" value="ECO:0000318"/>
    <property type="project" value="GO_Central"/>
</dbReference>
<dbReference type="GO" id="GO:0004068">
    <property type="term" value="F:aspartate 1-decarboxylase activity"/>
    <property type="evidence" value="ECO:0000318"/>
    <property type="project" value="GO_Central"/>
</dbReference>
<dbReference type="GO" id="GO:0006523">
    <property type="term" value="P:alanine biosynthetic process"/>
    <property type="evidence" value="ECO:0000318"/>
    <property type="project" value="GO_Central"/>
</dbReference>
<dbReference type="GO" id="GO:0015940">
    <property type="term" value="P:pantothenate biosynthetic process"/>
    <property type="evidence" value="ECO:0000318"/>
    <property type="project" value="GO_Central"/>
</dbReference>
<dbReference type="CDD" id="cd06919">
    <property type="entry name" value="Asp_decarbox"/>
    <property type="match status" value="1"/>
</dbReference>
<dbReference type="Gene3D" id="2.40.40.20">
    <property type="match status" value="1"/>
</dbReference>
<dbReference type="HAMAP" id="MF_00446">
    <property type="entry name" value="PanD"/>
    <property type="match status" value="1"/>
</dbReference>
<dbReference type="InterPro" id="IPR009010">
    <property type="entry name" value="Asp_de-COase-like_dom_sf"/>
</dbReference>
<dbReference type="InterPro" id="IPR003190">
    <property type="entry name" value="Asp_decarbox"/>
</dbReference>
<dbReference type="NCBIfam" id="TIGR00223">
    <property type="entry name" value="panD"/>
    <property type="match status" value="1"/>
</dbReference>
<dbReference type="PANTHER" id="PTHR21012">
    <property type="entry name" value="ASPARTATE 1-DECARBOXYLASE"/>
    <property type="match status" value="1"/>
</dbReference>
<dbReference type="PANTHER" id="PTHR21012:SF0">
    <property type="entry name" value="ASPARTATE 1-DECARBOXYLASE"/>
    <property type="match status" value="1"/>
</dbReference>
<dbReference type="Pfam" id="PF02261">
    <property type="entry name" value="Asp_decarbox"/>
    <property type="match status" value="1"/>
</dbReference>
<dbReference type="PIRSF" id="PIRSF006246">
    <property type="entry name" value="Asp_decarbox"/>
    <property type="match status" value="1"/>
</dbReference>
<dbReference type="SUPFAM" id="SSF50692">
    <property type="entry name" value="ADC-like"/>
    <property type="match status" value="1"/>
</dbReference>
<feature type="chain" id="PRO_0000023109" description="Aspartate 1-decarboxylase beta chain" evidence="1">
    <location>
        <begin position="1"/>
        <end position="24"/>
    </location>
</feature>
<feature type="chain" id="PRO_0000023110" description="Aspartate 1-decarboxylase alpha chain" evidence="1">
    <location>
        <begin position="25"/>
        <end position="127"/>
    </location>
</feature>
<feature type="active site" description="Schiff-base intermediate with substrate; via pyruvic acid" evidence="1">
    <location>
        <position position="25"/>
    </location>
</feature>
<feature type="active site" description="Proton donor" evidence="1">
    <location>
        <position position="58"/>
    </location>
</feature>
<feature type="binding site" evidence="1">
    <location>
        <position position="57"/>
    </location>
    <ligand>
        <name>substrate</name>
    </ligand>
</feature>
<feature type="binding site" evidence="1">
    <location>
        <begin position="73"/>
        <end position="75"/>
    </location>
    <ligand>
        <name>substrate</name>
    </ligand>
</feature>
<feature type="modified residue" description="Pyruvic acid (Ser)" evidence="1">
    <location>
        <position position="25"/>
    </location>
</feature>
<name>PAND_LISMO</name>
<comment type="function">
    <text evidence="1">Catalyzes the pyruvoyl-dependent decarboxylation of aspartate to produce beta-alanine.</text>
</comment>
<comment type="catalytic activity">
    <reaction evidence="1">
        <text>L-aspartate + H(+) = beta-alanine + CO2</text>
        <dbReference type="Rhea" id="RHEA:19497"/>
        <dbReference type="ChEBI" id="CHEBI:15378"/>
        <dbReference type="ChEBI" id="CHEBI:16526"/>
        <dbReference type="ChEBI" id="CHEBI:29991"/>
        <dbReference type="ChEBI" id="CHEBI:57966"/>
        <dbReference type="EC" id="4.1.1.11"/>
    </reaction>
</comment>
<comment type="cofactor">
    <cofactor evidence="1">
        <name>pyruvate</name>
        <dbReference type="ChEBI" id="CHEBI:15361"/>
    </cofactor>
    <text evidence="1">Binds 1 pyruvoyl group covalently per subunit.</text>
</comment>
<comment type="pathway">
    <text evidence="1">Cofactor biosynthesis; (R)-pantothenate biosynthesis; beta-alanine from L-aspartate: step 1/1.</text>
</comment>
<comment type="subunit">
    <text evidence="1">Heterooctamer of four alpha and four beta subunits.</text>
</comment>
<comment type="subcellular location">
    <subcellularLocation>
        <location evidence="1">Cytoplasm</location>
    </subcellularLocation>
</comment>
<comment type="PTM">
    <text evidence="1">Is synthesized initially as an inactive proenzyme, which is activated by self-cleavage at a specific serine bond to produce a beta-subunit with a hydroxyl group at its C-terminus and an alpha-subunit with a pyruvoyl group at its N-terminus.</text>
</comment>
<comment type="similarity">
    <text evidence="1">Belongs to the PanD family.</text>
</comment>
<sequence length="127" mass="13959">MFRTMMNGKIHRATVTEANLNYVGSITIDSAILEAVDMLPNEKVQIVNNNNGARIETYIIPGEPGSGVICLNGAAARHVQVGDVVIIMSYGMFTDEEAKTHEPKIVVLDEKNHIEMILPEEKAHTTL</sequence>
<accession>Q8Y603</accession>
<proteinExistence type="inferred from homology"/>
<gene>
    <name evidence="1" type="primary">panD</name>
    <name type="ordered locus">lmo1900</name>
</gene>